<protein>
    <recommendedName>
        <fullName evidence="1">Glucose-1-phosphate adenylyltransferase</fullName>
        <ecNumber evidence="1">2.7.7.27</ecNumber>
    </recommendedName>
    <alternativeName>
        <fullName evidence="1">ADP-glucose pyrophosphorylase</fullName>
        <shortName evidence="1">ADPGlc PPase</shortName>
    </alternativeName>
    <alternativeName>
        <fullName evidence="1">ADP-glucose synthase</fullName>
    </alternativeName>
</protein>
<sequence length="420" mass="47292">MSNVRYISNLTRETYALILAGGRGSRLHELTDWRAKPALYFGGKFRIIDFPLSNCINSGIRRVGVVTQYKSHSLIRHVMRGWGHFKKELGESVEILPASQRYSENWYQGTADAVFQNIDIIRHELPKYVMVLSGDHVYRMDYAGLLAAHAESGADMTVSCLEVPVAEAAGAFGVMEVDDEMRILGFEEKPKHPKHSPGNPEKCLASMGNYVFNTEFLFDQLKKDAQNANSDRDFGKDIIPSIIEKHKVFAYPFKSAFPNEQAYWRDVGTLDSFWQANMELLSPTPALNLYDAKWPIWTYQEQLPPAKFVFDDDDRRGMAVDSIISGGCIISGATVRRSVLFNEVRVCSYSVVEDSVVLPDVVVLRHCKIKNAIIDRGCIIPEGTVIGYNHDHDRAKGFRVSEKGITLVTRDMLGLPVGYE</sequence>
<accession>Q0HGJ1</accession>
<gene>
    <name evidence="1" type="primary">glgC</name>
    <name type="ordered locus">Shewmr4_2755</name>
</gene>
<dbReference type="EC" id="2.7.7.27" evidence="1"/>
<dbReference type="EMBL" id="CP000446">
    <property type="protein sequence ID" value="ABI39826.1"/>
    <property type="molecule type" value="Genomic_DNA"/>
</dbReference>
<dbReference type="RefSeq" id="WP_011623506.1">
    <property type="nucleotide sequence ID" value="NC_008321.1"/>
</dbReference>
<dbReference type="SMR" id="Q0HGJ1"/>
<dbReference type="KEGG" id="she:Shewmr4_2755"/>
<dbReference type="HOGENOM" id="CLU_029499_14_1_6"/>
<dbReference type="UniPathway" id="UPA00164"/>
<dbReference type="GO" id="GO:0005524">
    <property type="term" value="F:ATP binding"/>
    <property type="evidence" value="ECO:0007669"/>
    <property type="project" value="UniProtKB-KW"/>
</dbReference>
<dbReference type="GO" id="GO:0008878">
    <property type="term" value="F:glucose-1-phosphate adenylyltransferase activity"/>
    <property type="evidence" value="ECO:0007669"/>
    <property type="project" value="UniProtKB-UniRule"/>
</dbReference>
<dbReference type="GO" id="GO:0005978">
    <property type="term" value="P:glycogen biosynthetic process"/>
    <property type="evidence" value="ECO:0007669"/>
    <property type="project" value="UniProtKB-UniRule"/>
</dbReference>
<dbReference type="CDD" id="cd02508">
    <property type="entry name" value="ADP_Glucose_PP"/>
    <property type="match status" value="1"/>
</dbReference>
<dbReference type="CDD" id="cd04651">
    <property type="entry name" value="LbH_G1P_AT_C"/>
    <property type="match status" value="1"/>
</dbReference>
<dbReference type="Gene3D" id="2.160.10.10">
    <property type="entry name" value="Hexapeptide repeat proteins"/>
    <property type="match status" value="1"/>
</dbReference>
<dbReference type="Gene3D" id="3.90.550.10">
    <property type="entry name" value="Spore Coat Polysaccharide Biosynthesis Protein SpsA, Chain A"/>
    <property type="match status" value="1"/>
</dbReference>
<dbReference type="HAMAP" id="MF_00624">
    <property type="entry name" value="GlgC"/>
    <property type="match status" value="1"/>
</dbReference>
<dbReference type="InterPro" id="IPR011831">
    <property type="entry name" value="ADP-Glc_PPase"/>
</dbReference>
<dbReference type="InterPro" id="IPR005836">
    <property type="entry name" value="ADP_Glu_pyroP_CS"/>
</dbReference>
<dbReference type="InterPro" id="IPR023049">
    <property type="entry name" value="GlgC_bac"/>
</dbReference>
<dbReference type="InterPro" id="IPR056818">
    <property type="entry name" value="GlmU/GlgC-like_hexapep"/>
</dbReference>
<dbReference type="InterPro" id="IPR005835">
    <property type="entry name" value="NTP_transferase_dom"/>
</dbReference>
<dbReference type="InterPro" id="IPR029044">
    <property type="entry name" value="Nucleotide-diphossugar_trans"/>
</dbReference>
<dbReference type="InterPro" id="IPR011004">
    <property type="entry name" value="Trimer_LpxA-like_sf"/>
</dbReference>
<dbReference type="NCBIfam" id="TIGR02091">
    <property type="entry name" value="glgC"/>
    <property type="match status" value="1"/>
</dbReference>
<dbReference type="NCBIfam" id="NF001947">
    <property type="entry name" value="PRK00725.1"/>
    <property type="match status" value="1"/>
</dbReference>
<dbReference type="NCBIfam" id="NF002023">
    <property type="entry name" value="PRK00844.1"/>
    <property type="match status" value="1"/>
</dbReference>
<dbReference type="PANTHER" id="PTHR43523:SF2">
    <property type="entry name" value="GLUCOSE-1-PHOSPHATE ADENYLYLTRANSFERASE"/>
    <property type="match status" value="1"/>
</dbReference>
<dbReference type="PANTHER" id="PTHR43523">
    <property type="entry name" value="GLUCOSE-1-PHOSPHATE ADENYLYLTRANSFERASE-RELATED"/>
    <property type="match status" value="1"/>
</dbReference>
<dbReference type="Pfam" id="PF24894">
    <property type="entry name" value="Hexapep_GlmU"/>
    <property type="match status" value="1"/>
</dbReference>
<dbReference type="Pfam" id="PF00483">
    <property type="entry name" value="NTP_transferase"/>
    <property type="match status" value="1"/>
</dbReference>
<dbReference type="SUPFAM" id="SSF53448">
    <property type="entry name" value="Nucleotide-diphospho-sugar transferases"/>
    <property type="match status" value="1"/>
</dbReference>
<dbReference type="SUPFAM" id="SSF51161">
    <property type="entry name" value="Trimeric LpxA-like enzymes"/>
    <property type="match status" value="1"/>
</dbReference>
<dbReference type="PROSITE" id="PS00808">
    <property type="entry name" value="ADP_GLC_PYROPHOSPH_1"/>
    <property type="match status" value="1"/>
</dbReference>
<dbReference type="PROSITE" id="PS00809">
    <property type="entry name" value="ADP_GLC_PYROPHOSPH_2"/>
    <property type="match status" value="1"/>
</dbReference>
<dbReference type="PROSITE" id="PS00810">
    <property type="entry name" value="ADP_GLC_PYROPHOSPH_3"/>
    <property type="match status" value="1"/>
</dbReference>
<evidence type="ECO:0000255" key="1">
    <source>
        <dbReference type="HAMAP-Rule" id="MF_00624"/>
    </source>
</evidence>
<organism>
    <name type="scientific">Shewanella sp. (strain MR-4)</name>
    <dbReference type="NCBI Taxonomy" id="60480"/>
    <lineage>
        <taxon>Bacteria</taxon>
        <taxon>Pseudomonadati</taxon>
        <taxon>Pseudomonadota</taxon>
        <taxon>Gammaproteobacteria</taxon>
        <taxon>Alteromonadales</taxon>
        <taxon>Shewanellaceae</taxon>
        <taxon>Shewanella</taxon>
    </lineage>
</organism>
<keyword id="KW-0067">ATP-binding</keyword>
<keyword id="KW-0119">Carbohydrate metabolism</keyword>
<keyword id="KW-0320">Glycogen biosynthesis</keyword>
<keyword id="KW-0321">Glycogen metabolism</keyword>
<keyword id="KW-0547">Nucleotide-binding</keyword>
<keyword id="KW-0548">Nucleotidyltransferase</keyword>
<keyword id="KW-0808">Transferase</keyword>
<name>GLGC_SHESM</name>
<feature type="chain" id="PRO_0000261898" description="Glucose-1-phosphate adenylyltransferase">
    <location>
        <begin position="1"/>
        <end position="420"/>
    </location>
</feature>
<feature type="binding site" evidence="1">
    <location>
        <position position="107"/>
    </location>
    <ligand>
        <name>alpha-D-glucose 1-phosphate</name>
        <dbReference type="ChEBI" id="CHEBI:58601"/>
    </ligand>
</feature>
<feature type="binding site" evidence="1">
    <location>
        <position position="173"/>
    </location>
    <ligand>
        <name>alpha-D-glucose 1-phosphate</name>
        <dbReference type="ChEBI" id="CHEBI:58601"/>
    </ligand>
</feature>
<feature type="binding site" evidence="1">
    <location>
        <begin position="188"/>
        <end position="189"/>
    </location>
    <ligand>
        <name>alpha-D-glucose 1-phosphate</name>
        <dbReference type="ChEBI" id="CHEBI:58601"/>
    </ligand>
</feature>
<feature type="binding site" evidence="1">
    <location>
        <position position="206"/>
    </location>
    <ligand>
        <name>alpha-D-glucose 1-phosphate</name>
        <dbReference type="ChEBI" id="CHEBI:58601"/>
    </ligand>
</feature>
<comment type="function">
    <text evidence="1">Involved in the biosynthesis of ADP-glucose, a building block required for the elongation reactions to produce glycogen. Catalyzes the reaction between ATP and alpha-D-glucose 1-phosphate (G1P) to produce pyrophosphate and ADP-Glc.</text>
</comment>
<comment type="catalytic activity">
    <reaction evidence="1">
        <text>alpha-D-glucose 1-phosphate + ATP + H(+) = ADP-alpha-D-glucose + diphosphate</text>
        <dbReference type="Rhea" id="RHEA:12120"/>
        <dbReference type="ChEBI" id="CHEBI:15378"/>
        <dbReference type="ChEBI" id="CHEBI:30616"/>
        <dbReference type="ChEBI" id="CHEBI:33019"/>
        <dbReference type="ChEBI" id="CHEBI:57498"/>
        <dbReference type="ChEBI" id="CHEBI:58601"/>
        <dbReference type="EC" id="2.7.7.27"/>
    </reaction>
</comment>
<comment type="pathway">
    <text evidence="1">Glycan biosynthesis; glycogen biosynthesis.</text>
</comment>
<comment type="subunit">
    <text evidence="1">Homotetramer.</text>
</comment>
<comment type="similarity">
    <text evidence="1">Belongs to the bacterial/plant glucose-1-phosphate adenylyltransferase family.</text>
</comment>
<proteinExistence type="inferred from homology"/>
<reference key="1">
    <citation type="submission" date="2006-08" db="EMBL/GenBank/DDBJ databases">
        <title>Complete sequence of Shewanella sp. MR-4.</title>
        <authorList>
            <consortium name="US DOE Joint Genome Institute"/>
            <person name="Copeland A."/>
            <person name="Lucas S."/>
            <person name="Lapidus A."/>
            <person name="Barry K."/>
            <person name="Detter J.C."/>
            <person name="Glavina del Rio T."/>
            <person name="Hammon N."/>
            <person name="Israni S."/>
            <person name="Dalin E."/>
            <person name="Tice H."/>
            <person name="Pitluck S."/>
            <person name="Kiss H."/>
            <person name="Brettin T."/>
            <person name="Bruce D."/>
            <person name="Han C."/>
            <person name="Tapia R."/>
            <person name="Gilna P."/>
            <person name="Schmutz J."/>
            <person name="Larimer F."/>
            <person name="Land M."/>
            <person name="Hauser L."/>
            <person name="Kyrpides N."/>
            <person name="Mikhailova N."/>
            <person name="Nealson K."/>
            <person name="Konstantinidis K."/>
            <person name="Klappenbach J."/>
            <person name="Tiedje J."/>
            <person name="Richardson P."/>
        </authorList>
    </citation>
    <scope>NUCLEOTIDE SEQUENCE [LARGE SCALE GENOMIC DNA]</scope>
    <source>
        <strain>MR-4</strain>
    </source>
</reference>